<protein>
    <recommendedName>
        <fullName evidence="1">Ribosomal lysine N-methyltransferase 5</fullName>
        <ecNumber evidence="1">2.1.1.-</ecNumber>
    </recommendedName>
</protein>
<proteinExistence type="inferred from homology"/>
<dbReference type="EC" id="2.1.1.-" evidence="1"/>
<dbReference type="EMBL" id="ADVS01000038">
    <property type="protein sequence ID" value="EGA73971.1"/>
    <property type="molecule type" value="Genomic_DNA"/>
</dbReference>
<dbReference type="HOGENOM" id="CLU_051532_0_0_1"/>
<dbReference type="OMA" id="ACDTIYN"/>
<dbReference type="OrthoDB" id="2529286at2759"/>
<dbReference type="GO" id="GO:0005829">
    <property type="term" value="C:cytosol"/>
    <property type="evidence" value="ECO:0007669"/>
    <property type="project" value="TreeGrafter"/>
</dbReference>
<dbReference type="GO" id="GO:0032991">
    <property type="term" value="C:protein-containing complex"/>
    <property type="evidence" value="ECO:0007669"/>
    <property type="project" value="TreeGrafter"/>
</dbReference>
<dbReference type="GO" id="GO:0008757">
    <property type="term" value="F:S-adenosylmethionine-dependent methyltransferase activity"/>
    <property type="evidence" value="ECO:0007669"/>
    <property type="project" value="UniProtKB-ARBA"/>
</dbReference>
<dbReference type="GO" id="GO:0032259">
    <property type="term" value="P:methylation"/>
    <property type="evidence" value="ECO:0007669"/>
    <property type="project" value="UniProtKB-KW"/>
</dbReference>
<dbReference type="Gene3D" id="3.40.50.150">
    <property type="entry name" value="Vaccinia Virus protein VP39"/>
    <property type="match status" value="1"/>
</dbReference>
<dbReference type="InterPro" id="IPR019410">
    <property type="entry name" value="Methyltransf_16"/>
</dbReference>
<dbReference type="InterPro" id="IPR029063">
    <property type="entry name" value="SAM-dependent_MTases_sf"/>
</dbReference>
<dbReference type="PANTHER" id="PTHR14614">
    <property type="entry name" value="HEPATOCELLULAR CARCINOMA-ASSOCIATED ANTIGEN"/>
    <property type="match status" value="1"/>
</dbReference>
<dbReference type="PANTHER" id="PTHR14614:SF109">
    <property type="entry name" value="RIBOSOMAL LYSINE N-METHYLTRANSFERASE 5"/>
    <property type="match status" value="1"/>
</dbReference>
<comment type="function">
    <text evidence="1">S-adenosyl-L-methionine-dependent protein-lysine N-methyltransferase that monomethylates 60S ribosomal protein L1 (RPL1A and RPL1B) at 'Lys-46'.</text>
</comment>
<comment type="similarity">
    <text evidence="4">Belongs to the class I-like SAM-binding methyltransferase superfamily. RKM5 family.</text>
</comment>
<keyword id="KW-0489">Methyltransferase</keyword>
<keyword id="KW-0949">S-adenosyl-L-methionine</keyword>
<keyword id="KW-0808">Transferase</keyword>
<gene>
    <name type="primary">RKM5</name>
    <name type="ORF">AWRI796_3230</name>
</gene>
<evidence type="ECO:0000250" key="1">
    <source>
        <dbReference type="UniProtKB" id="Q12367"/>
    </source>
</evidence>
<evidence type="ECO:0000250" key="2">
    <source>
        <dbReference type="UniProtKB" id="Q9H867"/>
    </source>
</evidence>
<evidence type="ECO:0000256" key="3">
    <source>
        <dbReference type="SAM" id="MobiDB-lite"/>
    </source>
</evidence>
<evidence type="ECO:0000305" key="4"/>
<name>RKM5_YEASA</name>
<feature type="chain" id="PRO_0000411050" description="Ribosomal lysine N-methyltransferase 5">
    <location>
        <begin position="1"/>
        <end position="367"/>
    </location>
</feature>
<feature type="region of interest" description="Disordered" evidence="3">
    <location>
        <begin position="55"/>
        <end position="74"/>
    </location>
</feature>
<feature type="compositionally biased region" description="Basic residues" evidence="3">
    <location>
        <begin position="58"/>
        <end position="68"/>
    </location>
</feature>
<feature type="binding site" evidence="2">
    <location>
        <position position="110"/>
    </location>
    <ligand>
        <name>S-adenosyl-L-methionine</name>
        <dbReference type="ChEBI" id="CHEBI:59789"/>
    </ligand>
</feature>
<feature type="binding site" evidence="2">
    <location>
        <begin position="170"/>
        <end position="172"/>
    </location>
    <ligand>
        <name>S-adenosyl-L-methionine</name>
        <dbReference type="ChEBI" id="CHEBI:59789"/>
    </ligand>
</feature>
<feature type="binding site" evidence="2">
    <location>
        <position position="192"/>
    </location>
    <ligand>
        <name>S-adenosyl-L-methionine</name>
        <dbReference type="ChEBI" id="CHEBI:59789"/>
    </ligand>
</feature>
<feature type="binding site" evidence="2">
    <location>
        <position position="256"/>
    </location>
    <ligand>
        <name>S-adenosyl-L-methionine</name>
        <dbReference type="ChEBI" id="CHEBI:59789"/>
    </ligand>
</feature>
<feature type="binding site" evidence="2">
    <location>
        <position position="288"/>
    </location>
    <ligand>
        <name>S-adenosyl-L-methionine</name>
        <dbReference type="ChEBI" id="CHEBI:59789"/>
    </ligand>
</feature>
<accession>E7KFK5</accession>
<sequence length="367" mass="41356">MAFKLWLLDEETIYEHVFERYTQLEGQSGKLAQDLGIQDRRGGVLEITFEPSGLEGGRKKKRVRRRNKASSVEEDQNVAVDSYHVSVGQSISSLHSSRDNGNSTTGYVLWSTTPFFINWLLYSTSAAPFRLGSQVEVTCGSSCEGHMLELPRLIDLTGADRGKRGILELGAGISGILPVILGNFVDTYVSTDQKGILNKLKDNIMENLSQLTRKRCISRSLRLELPTVEPVGDADITAASLPSKSTLHLEVAALDWEKINLQDKKTHSLHPELSLIGETCSSVYVIAMDVIYNEYLIDPFLKTLKQLKHWLQTTYNLQFHVLVGIHLRSQEVTTLFLEKAIIEYDLTVYDIVDQVIQESRFNFYLIT</sequence>
<organism>
    <name type="scientific">Saccharomyces cerevisiae (strain AWRI796)</name>
    <name type="common">Baker's yeast</name>
    <dbReference type="NCBI Taxonomy" id="764097"/>
    <lineage>
        <taxon>Eukaryota</taxon>
        <taxon>Fungi</taxon>
        <taxon>Dikarya</taxon>
        <taxon>Ascomycota</taxon>
        <taxon>Saccharomycotina</taxon>
        <taxon>Saccharomycetes</taxon>
        <taxon>Saccharomycetales</taxon>
        <taxon>Saccharomycetaceae</taxon>
        <taxon>Saccharomyces</taxon>
    </lineage>
</organism>
<reference key="1">
    <citation type="journal article" date="2011" name="PLoS Genet.">
        <title>Whole-genome comparison reveals novel genetic elements that characterize the genome of industrial strains of Saccharomyces cerevisiae.</title>
        <authorList>
            <person name="Borneman A.R."/>
            <person name="Desany B.A."/>
            <person name="Riches D."/>
            <person name="Affourtit J.P."/>
            <person name="Forgan A.H."/>
            <person name="Pretorius I.S."/>
            <person name="Egholm M."/>
            <person name="Chambers P.J."/>
        </authorList>
    </citation>
    <scope>NUCLEOTIDE SEQUENCE [LARGE SCALE GENOMIC DNA]</scope>
    <source>
        <strain>AWRI796</strain>
    </source>
</reference>